<organism>
    <name type="scientific">Trichodesmium erythraeum (strain IMS101)</name>
    <dbReference type="NCBI Taxonomy" id="203124"/>
    <lineage>
        <taxon>Bacteria</taxon>
        <taxon>Bacillati</taxon>
        <taxon>Cyanobacteriota</taxon>
        <taxon>Cyanophyceae</taxon>
        <taxon>Oscillatoriophycideae</taxon>
        <taxon>Oscillatoriales</taxon>
        <taxon>Microcoleaceae</taxon>
        <taxon>Trichodesmium</taxon>
    </lineage>
</organism>
<dbReference type="EC" id="5.4.2.12" evidence="1"/>
<dbReference type="EMBL" id="CP000393">
    <property type="protein sequence ID" value="ABG50388.1"/>
    <property type="molecule type" value="Genomic_DNA"/>
</dbReference>
<dbReference type="RefSeq" id="WP_011610775.1">
    <property type="nucleotide sequence ID" value="NC_008312.1"/>
</dbReference>
<dbReference type="SMR" id="Q117D6"/>
<dbReference type="STRING" id="203124.Tery_1011"/>
<dbReference type="KEGG" id="ter:Tery_1011"/>
<dbReference type="eggNOG" id="COG0696">
    <property type="taxonomic scope" value="Bacteria"/>
</dbReference>
<dbReference type="HOGENOM" id="CLU_026099_2_0_3"/>
<dbReference type="OrthoDB" id="9800863at2"/>
<dbReference type="UniPathway" id="UPA00109">
    <property type="reaction ID" value="UER00186"/>
</dbReference>
<dbReference type="GO" id="GO:0005829">
    <property type="term" value="C:cytosol"/>
    <property type="evidence" value="ECO:0007669"/>
    <property type="project" value="TreeGrafter"/>
</dbReference>
<dbReference type="GO" id="GO:0030145">
    <property type="term" value="F:manganese ion binding"/>
    <property type="evidence" value="ECO:0007669"/>
    <property type="project" value="UniProtKB-UniRule"/>
</dbReference>
<dbReference type="GO" id="GO:0004619">
    <property type="term" value="F:phosphoglycerate mutase activity"/>
    <property type="evidence" value="ECO:0007669"/>
    <property type="project" value="UniProtKB-EC"/>
</dbReference>
<dbReference type="GO" id="GO:0006007">
    <property type="term" value="P:glucose catabolic process"/>
    <property type="evidence" value="ECO:0007669"/>
    <property type="project" value="InterPro"/>
</dbReference>
<dbReference type="GO" id="GO:0006096">
    <property type="term" value="P:glycolytic process"/>
    <property type="evidence" value="ECO:0007669"/>
    <property type="project" value="UniProtKB-UniRule"/>
</dbReference>
<dbReference type="CDD" id="cd16010">
    <property type="entry name" value="iPGM"/>
    <property type="match status" value="1"/>
</dbReference>
<dbReference type="FunFam" id="3.40.1450.10:FF:000002">
    <property type="entry name" value="2,3-bisphosphoglycerate-independent phosphoglycerate mutase"/>
    <property type="match status" value="1"/>
</dbReference>
<dbReference type="Gene3D" id="3.40.720.10">
    <property type="entry name" value="Alkaline Phosphatase, subunit A"/>
    <property type="match status" value="1"/>
</dbReference>
<dbReference type="Gene3D" id="3.40.1450.10">
    <property type="entry name" value="BPG-independent phosphoglycerate mutase, domain B"/>
    <property type="match status" value="1"/>
</dbReference>
<dbReference type="HAMAP" id="MF_01038">
    <property type="entry name" value="GpmI"/>
    <property type="match status" value="1"/>
</dbReference>
<dbReference type="InterPro" id="IPR017850">
    <property type="entry name" value="Alkaline_phosphatase_core_sf"/>
</dbReference>
<dbReference type="InterPro" id="IPR011258">
    <property type="entry name" value="BPG-indep_PGM_N"/>
</dbReference>
<dbReference type="InterPro" id="IPR006124">
    <property type="entry name" value="Metalloenzyme"/>
</dbReference>
<dbReference type="InterPro" id="IPR036646">
    <property type="entry name" value="PGAM_B_sf"/>
</dbReference>
<dbReference type="InterPro" id="IPR005995">
    <property type="entry name" value="Pgm_bpd_ind"/>
</dbReference>
<dbReference type="NCBIfam" id="TIGR01307">
    <property type="entry name" value="pgm_bpd_ind"/>
    <property type="match status" value="1"/>
</dbReference>
<dbReference type="PANTHER" id="PTHR31637">
    <property type="entry name" value="2,3-BISPHOSPHOGLYCERATE-INDEPENDENT PHOSPHOGLYCERATE MUTASE"/>
    <property type="match status" value="1"/>
</dbReference>
<dbReference type="PANTHER" id="PTHR31637:SF0">
    <property type="entry name" value="2,3-BISPHOSPHOGLYCERATE-INDEPENDENT PHOSPHOGLYCERATE MUTASE"/>
    <property type="match status" value="1"/>
</dbReference>
<dbReference type="Pfam" id="PF06415">
    <property type="entry name" value="iPGM_N"/>
    <property type="match status" value="1"/>
</dbReference>
<dbReference type="Pfam" id="PF01676">
    <property type="entry name" value="Metalloenzyme"/>
    <property type="match status" value="1"/>
</dbReference>
<dbReference type="PIRSF" id="PIRSF001492">
    <property type="entry name" value="IPGAM"/>
    <property type="match status" value="1"/>
</dbReference>
<dbReference type="SUPFAM" id="SSF64158">
    <property type="entry name" value="2,3-Bisphosphoglycerate-independent phosphoglycerate mutase, substrate-binding domain"/>
    <property type="match status" value="1"/>
</dbReference>
<dbReference type="SUPFAM" id="SSF53649">
    <property type="entry name" value="Alkaline phosphatase-like"/>
    <property type="match status" value="1"/>
</dbReference>
<keyword id="KW-0324">Glycolysis</keyword>
<keyword id="KW-0413">Isomerase</keyword>
<keyword id="KW-0464">Manganese</keyword>
<keyword id="KW-0479">Metal-binding</keyword>
<reference key="1">
    <citation type="journal article" date="2015" name="Proc. Natl. Acad. Sci. U.S.A.">
        <title>Trichodesmium genome maintains abundant, widespread noncoding DNA in situ, despite oligotrophic lifestyle.</title>
        <authorList>
            <person name="Walworth N."/>
            <person name="Pfreundt U."/>
            <person name="Nelson W.C."/>
            <person name="Mincer T."/>
            <person name="Heidelberg J.F."/>
            <person name="Fu F."/>
            <person name="Waterbury J.B."/>
            <person name="Glavina del Rio T."/>
            <person name="Goodwin L."/>
            <person name="Kyrpides N.C."/>
            <person name="Land M.L."/>
            <person name="Woyke T."/>
            <person name="Hutchins D.A."/>
            <person name="Hess W.R."/>
            <person name="Webb E.A."/>
        </authorList>
    </citation>
    <scope>NUCLEOTIDE SEQUENCE [LARGE SCALE GENOMIC DNA]</scope>
    <source>
        <strain>IMS101</strain>
    </source>
</reference>
<protein>
    <recommendedName>
        <fullName evidence="1">2,3-bisphosphoglycerate-independent phosphoglycerate mutase</fullName>
        <shortName evidence="1">BPG-independent PGAM</shortName>
        <shortName evidence="1">Phosphoglyceromutase</shortName>
        <shortName evidence="1">iPGM</shortName>
        <ecNumber evidence="1">5.4.2.12</ecNumber>
    </recommendedName>
</protein>
<comment type="function">
    <text evidence="1">Catalyzes the interconversion of 2-phosphoglycerate and 3-phosphoglycerate.</text>
</comment>
<comment type="catalytic activity">
    <reaction evidence="1">
        <text>(2R)-2-phosphoglycerate = (2R)-3-phosphoglycerate</text>
        <dbReference type="Rhea" id="RHEA:15901"/>
        <dbReference type="ChEBI" id="CHEBI:58272"/>
        <dbReference type="ChEBI" id="CHEBI:58289"/>
        <dbReference type="EC" id="5.4.2.12"/>
    </reaction>
</comment>
<comment type="cofactor">
    <cofactor evidence="1">
        <name>Mn(2+)</name>
        <dbReference type="ChEBI" id="CHEBI:29035"/>
    </cofactor>
    <text evidence="1">Binds 2 manganese ions per subunit.</text>
</comment>
<comment type="pathway">
    <text evidence="1">Carbohydrate degradation; glycolysis; pyruvate from D-glyceraldehyde 3-phosphate: step 3/5.</text>
</comment>
<comment type="subunit">
    <text evidence="1">Monomer.</text>
</comment>
<comment type="similarity">
    <text evidence="1">Belongs to the BPG-independent phosphoglycerate mutase family.</text>
</comment>
<evidence type="ECO:0000255" key="1">
    <source>
        <dbReference type="HAMAP-Rule" id="MF_01038"/>
    </source>
</evidence>
<accession>Q117D6</accession>
<name>GPMI_TRIEI</name>
<sequence length="532" mass="58210">MKNGSISPVVLIILDGWGYREEKYGNAIAVGKTPNIDSLWQAYPRTLIQASGKAVGLPEGQMGNSEVGHLNIGAGRVVPQELVRISDAIEDGLIVQNQAIKKICQDVIERNSKLHLVGLCSSGGVHSHVNHLLGLLDVAKAKGISDVCVHAITDGRDTNPKSGLHVLKQIEYHTNQIGIGRIATVSGRYYAMDRDKRWDRIQKAYEVMTQDGYGTGCSASDLLQKSYAEGITDEFVLPVRVAPGAVEPGDGVIFFNFRPDRARQLTQAFVAPDFNGFERQTIQPLTFLTFTQYDSSFPVLVAFEPQNFNNILGQVISQHGLRQFRTAETEKYAHVTYFFNGGLEQPFEGEDRELVQSPMVSHYDEAPEMSAEDLTEVAIAAVKKQIYSLIVINYANPDMVGHTGAMDAAVNAVQTVDHCLGKLLQGISKVGGTAIIIADHGNAEYMWDEDGNPWTAHTTNLVPFILIEGEVSKIPGHGTKVPLRENGCLADIAPTILEILNLPQPAEMTGKSIIKKAEYELKPNRTPVRVGL</sequence>
<gene>
    <name evidence="1" type="primary">gpmI</name>
    <name type="ordered locus">Tery_1011</name>
</gene>
<feature type="chain" id="PRO_1000064015" description="2,3-bisphosphoglycerate-independent phosphoglycerate mutase">
    <location>
        <begin position="1"/>
        <end position="532"/>
    </location>
</feature>
<feature type="active site" description="Phosphoserine intermediate" evidence="1">
    <location>
        <position position="65"/>
    </location>
</feature>
<feature type="binding site" evidence="1">
    <location>
        <position position="15"/>
    </location>
    <ligand>
        <name>Mn(2+)</name>
        <dbReference type="ChEBI" id="CHEBI:29035"/>
        <label>2</label>
    </ligand>
</feature>
<feature type="binding site" evidence="1">
    <location>
        <position position="65"/>
    </location>
    <ligand>
        <name>Mn(2+)</name>
        <dbReference type="ChEBI" id="CHEBI:29035"/>
        <label>2</label>
    </ligand>
</feature>
<feature type="binding site" evidence="1">
    <location>
        <position position="126"/>
    </location>
    <ligand>
        <name>substrate</name>
    </ligand>
</feature>
<feature type="binding site" evidence="1">
    <location>
        <begin position="156"/>
        <end position="157"/>
    </location>
    <ligand>
        <name>substrate</name>
    </ligand>
</feature>
<feature type="binding site" evidence="1">
    <location>
        <position position="188"/>
    </location>
    <ligand>
        <name>substrate</name>
    </ligand>
</feature>
<feature type="binding site" evidence="1">
    <location>
        <position position="194"/>
    </location>
    <ligand>
        <name>substrate</name>
    </ligand>
</feature>
<feature type="binding site" evidence="1">
    <location>
        <begin position="258"/>
        <end position="261"/>
    </location>
    <ligand>
        <name>substrate</name>
    </ligand>
</feature>
<feature type="binding site" evidence="1">
    <location>
        <position position="331"/>
    </location>
    <ligand>
        <name>substrate</name>
    </ligand>
</feature>
<feature type="binding site" evidence="1">
    <location>
        <position position="398"/>
    </location>
    <ligand>
        <name>Mn(2+)</name>
        <dbReference type="ChEBI" id="CHEBI:29035"/>
        <label>1</label>
    </ligand>
</feature>
<feature type="binding site" evidence="1">
    <location>
        <position position="402"/>
    </location>
    <ligand>
        <name>Mn(2+)</name>
        <dbReference type="ChEBI" id="CHEBI:29035"/>
        <label>1</label>
    </ligand>
</feature>
<feature type="binding site" evidence="1">
    <location>
        <position position="439"/>
    </location>
    <ligand>
        <name>Mn(2+)</name>
        <dbReference type="ChEBI" id="CHEBI:29035"/>
        <label>2</label>
    </ligand>
</feature>
<feature type="binding site" evidence="1">
    <location>
        <position position="440"/>
    </location>
    <ligand>
        <name>Mn(2+)</name>
        <dbReference type="ChEBI" id="CHEBI:29035"/>
        <label>2</label>
    </ligand>
</feature>
<feature type="binding site" evidence="1">
    <location>
        <position position="457"/>
    </location>
    <ligand>
        <name>Mn(2+)</name>
        <dbReference type="ChEBI" id="CHEBI:29035"/>
        <label>1</label>
    </ligand>
</feature>
<proteinExistence type="inferred from homology"/>